<organism>
    <name type="scientific">Rattus norvegicus</name>
    <name type="common">Rat</name>
    <dbReference type="NCBI Taxonomy" id="10116"/>
    <lineage>
        <taxon>Eukaryota</taxon>
        <taxon>Metazoa</taxon>
        <taxon>Chordata</taxon>
        <taxon>Craniata</taxon>
        <taxon>Vertebrata</taxon>
        <taxon>Euteleostomi</taxon>
        <taxon>Mammalia</taxon>
        <taxon>Eutheria</taxon>
        <taxon>Euarchontoglires</taxon>
        <taxon>Glires</taxon>
        <taxon>Rodentia</taxon>
        <taxon>Myomorpha</taxon>
        <taxon>Muroidea</taxon>
        <taxon>Muridae</taxon>
        <taxon>Murinae</taxon>
        <taxon>Rattus</taxon>
    </lineage>
</organism>
<sequence>MAAFSKYLTARNSSLAGAAFLLFCLLHKRRRALGLHGKKSGKPPLQNNEKEGKKERAVVDKVFLSRLSQILKIMVPRTFCKETGYLILIAVMLVSRTYCDVWMIQNGTLIESGIIGRSSKDFKRYLFNFIAAMPLISLVNNFLKYGLNELKLCFRVRLTRYLYEEYLQAFTYYKMGNLDNRIANPDQLLTQDVEKFCNSVVDLYSNLSKPFLDIVLYIFKLTSAIGAQGPASMMAYLLVSGLFLTRLRRPIGKMTIMEQKYEGEYRFVNSRLITNSEEIAFYNGNKREKQTIHSVFRKLVEHLHNFIFFRFSMGFIDSIIAKYIATVVGYLVVSRPFLDLAHPRHLHSTHSELLEDYYQSGRMLLRMSQALGRIVLAGREMTRLAGFTARITELMQVLKDLNHGKYERTMVSQQDKGIEGAQASPLIPGAGEIINADNIIKFDHVPLATPNGDILIQDLSFEVRSGANVLICGPNGCGKSSLFRVLGELWPLFGGHLTKPERGKLFYVPQRPYMTLGTLRDQVIYPDGKEDQKKKGISDQVLKGYLDNVQLGHILEREGGWDSVQDWMDVLSGGEKQRMAMARLFYHKPQFAILDECTSAVSVDVEDYIYSHCRKVGITLFTVSHRKSLWKHHEYYLHMDGRGNYEFKKITEDTVEFGS</sequence>
<protein>
    <recommendedName>
        <fullName>ATP-binding cassette sub-family D member 3</fullName>
        <ecNumber evidence="1">3.1.2.-</ecNumber>
        <ecNumber evidence="1">7.6.2.-</ecNumber>
    </recommendedName>
    <alternativeName>
        <fullName evidence="10 11">70 kDa peroxisomal membrane protein</fullName>
        <shortName>PMP70</shortName>
    </alternativeName>
</protein>
<feature type="initiator methionine" description="Removed" evidence="8">
    <location>
        <position position="1"/>
    </location>
</feature>
<feature type="chain" id="PRO_0000093311" description="ATP-binding cassette sub-family D member 3">
    <location>
        <begin position="2"/>
        <end position="659"/>
    </location>
</feature>
<feature type="transmembrane region" description="Helical" evidence="6">
    <location>
        <begin position="84"/>
        <end position="104"/>
    </location>
</feature>
<feature type="transmembrane region" description="Helical" evidence="6">
    <location>
        <begin position="126"/>
        <end position="146"/>
    </location>
</feature>
<feature type="transmembrane region" description="Helical" evidence="6">
    <location>
        <begin position="224"/>
        <end position="244"/>
    </location>
</feature>
<feature type="transmembrane region" description="Helical" evidence="6">
    <location>
        <begin position="313"/>
        <end position="333"/>
    </location>
</feature>
<feature type="domain" description="ABC transmembrane type-1" evidence="6">
    <location>
        <begin position="85"/>
        <end position="372"/>
    </location>
</feature>
<feature type="domain" description="ABC transporter" evidence="5">
    <location>
        <begin position="434"/>
        <end position="659"/>
    </location>
</feature>
<feature type="region of interest" description="Interaction with PEX19" evidence="1">
    <location>
        <begin position="2"/>
        <end position="61"/>
    </location>
</feature>
<feature type="binding site" evidence="5">
    <location>
        <begin position="473"/>
        <end position="480"/>
    </location>
    <ligand>
        <name>ATP</name>
        <dbReference type="ChEBI" id="CHEBI:30616"/>
    </ligand>
</feature>
<feature type="modified residue" description="N6-acetyllysine" evidence="3">
    <location>
        <position position="61"/>
    </location>
</feature>
<feature type="modified residue" description="N6-acetyllysine" evidence="1">
    <location>
        <position position="260"/>
    </location>
</feature>
<feature type="modified residue" description="N6-acetyllysine" evidence="1">
    <location>
        <position position="399"/>
    </location>
</feature>
<feature type="modified residue" description="Phosphoserine" evidence="3">
    <location>
        <position position="424"/>
    </location>
</feature>
<feature type="modified residue" description="N6-acetyllysine" evidence="3">
    <location>
        <position position="533"/>
    </location>
</feature>
<feature type="modified residue" description="Phosphoserine" evidence="3">
    <location>
        <position position="659"/>
    </location>
</feature>
<feature type="glycosylation site" description="N-linked (GlcNAc...) asparagine" evidence="4">
    <location>
        <position position="12"/>
    </location>
</feature>
<feature type="glycosylation site" description="N-linked (GlcNAc...) asparagine" evidence="4">
    <location>
        <position position="106"/>
    </location>
</feature>
<feature type="glycosylation site" description="N-linked (GlcNAc...) asparagine" evidence="4">
    <location>
        <position position="206"/>
    </location>
</feature>
<feature type="mutagenesis site" description="Inhibition of palmitic acid beta-oxidation." evidence="7">
    <original>EE</original>
    <variation>DD</variation>
    <location>
        <begin position="277"/>
        <end position="278"/>
    </location>
</feature>
<feature type="mutagenesis site" description="Inhibition of palmitic acid beta-oxidation." evidence="7">
    <original>K</original>
    <variation>A</variation>
    <location>
        <position position="479"/>
    </location>
</feature>
<dbReference type="EC" id="3.1.2.-" evidence="1"/>
<dbReference type="EC" id="7.6.2.-" evidence="1"/>
<dbReference type="EMBL" id="D90038">
    <property type="protein sequence ID" value="BAA14086.1"/>
    <property type="molecule type" value="mRNA"/>
</dbReference>
<dbReference type="PIR" id="A35723">
    <property type="entry name" value="A35723"/>
</dbReference>
<dbReference type="RefSeq" id="NP_036936.1">
    <property type="nucleotide sequence ID" value="NM_012804.3"/>
</dbReference>
<dbReference type="SMR" id="P16970"/>
<dbReference type="BioGRID" id="247310">
    <property type="interactions" value="3"/>
</dbReference>
<dbReference type="FunCoup" id="P16970">
    <property type="interactions" value="2432"/>
</dbReference>
<dbReference type="IntAct" id="P16970">
    <property type="interactions" value="1"/>
</dbReference>
<dbReference type="STRING" id="10116.ENSRNOP00000016739"/>
<dbReference type="GlyCosmos" id="P16970">
    <property type="glycosylation" value="3 sites, No reported glycans"/>
</dbReference>
<dbReference type="GlyGen" id="P16970">
    <property type="glycosylation" value="4 sites, 1 O-linked glycan (1 site)"/>
</dbReference>
<dbReference type="iPTMnet" id="P16970"/>
<dbReference type="PhosphoSitePlus" id="P16970"/>
<dbReference type="jPOST" id="P16970"/>
<dbReference type="PaxDb" id="10116-ENSRNOP00000016739"/>
<dbReference type="Ensembl" id="ENSRNOT00000016739.7">
    <property type="protein sequence ID" value="ENSRNOP00000016739.5"/>
    <property type="gene ID" value="ENSRNOG00000011929.7"/>
</dbReference>
<dbReference type="GeneID" id="25270"/>
<dbReference type="KEGG" id="rno:25270"/>
<dbReference type="UCSC" id="RGD:2007">
    <property type="organism name" value="rat"/>
</dbReference>
<dbReference type="AGR" id="RGD:2007"/>
<dbReference type="CTD" id="5825"/>
<dbReference type="RGD" id="2007">
    <property type="gene designation" value="Abcd3"/>
</dbReference>
<dbReference type="eggNOG" id="KOG0060">
    <property type="taxonomic scope" value="Eukaryota"/>
</dbReference>
<dbReference type="GeneTree" id="ENSGT00950000182955"/>
<dbReference type="HOGENOM" id="CLU_007587_5_1_1"/>
<dbReference type="InParanoid" id="P16970"/>
<dbReference type="OrthoDB" id="422637at2759"/>
<dbReference type="PhylomeDB" id="P16970"/>
<dbReference type="Reactome" id="R-RNO-1369062">
    <property type="pathway name" value="ABC transporters in lipid homeostasis"/>
</dbReference>
<dbReference type="Reactome" id="R-RNO-8980692">
    <property type="pathway name" value="RHOA GTPase cycle"/>
</dbReference>
<dbReference type="Reactome" id="R-RNO-9603798">
    <property type="pathway name" value="Class I peroxisomal membrane protein import"/>
</dbReference>
<dbReference type="PRO" id="PR:P16970"/>
<dbReference type="Proteomes" id="UP000002494">
    <property type="component" value="Chromosome 2"/>
</dbReference>
<dbReference type="Bgee" id="ENSRNOG00000011929">
    <property type="expression patterns" value="Expressed in duodenum and 19 other cell types or tissues"/>
</dbReference>
<dbReference type="GO" id="GO:0005739">
    <property type="term" value="C:mitochondrion"/>
    <property type="evidence" value="ECO:0000314"/>
    <property type="project" value="UniProtKB"/>
</dbReference>
<dbReference type="GO" id="GO:0005782">
    <property type="term" value="C:peroxisomal matrix"/>
    <property type="evidence" value="ECO:0000266"/>
    <property type="project" value="RGD"/>
</dbReference>
<dbReference type="GO" id="GO:0005778">
    <property type="term" value="C:peroxisomal membrane"/>
    <property type="evidence" value="ECO:0000314"/>
    <property type="project" value="HGNC-UCL"/>
</dbReference>
<dbReference type="GO" id="GO:0005777">
    <property type="term" value="C:peroxisome"/>
    <property type="evidence" value="ECO:0000314"/>
    <property type="project" value="UniProtKB"/>
</dbReference>
<dbReference type="GO" id="GO:0140359">
    <property type="term" value="F:ABC-type transporter activity"/>
    <property type="evidence" value="ECO:0007669"/>
    <property type="project" value="InterPro"/>
</dbReference>
<dbReference type="GO" id="GO:0005524">
    <property type="term" value="F:ATP binding"/>
    <property type="evidence" value="ECO:0000314"/>
    <property type="project" value="RGD"/>
</dbReference>
<dbReference type="GO" id="GO:0016887">
    <property type="term" value="F:ATP hydrolysis activity"/>
    <property type="evidence" value="ECO:0000250"/>
    <property type="project" value="UniProtKB"/>
</dbReference>
<dbReference type="GO" id="GO:0042626">
    <property type="term" value="F:ATPase-coupled transmembrane transporter activity"/>
    <property type="evidence" value="ECO:0000266"/>
    <property type="project" value="RGD"/>
</dbReference>
<dbReference type="GO" id="GO:0047617">
    <property type="term" value="F:fatty acyl-CoA hydrolase activity"/>
    <property type="evidence" value="ECO:0000250"/>
    <property type="project" value="UniProtKB"/>
</dbReference>
<dbReference type="GO" id="GO:0042802">
    <property type="term" value="F:identical protein binding"/>
    <property type="evidence" value="ECO:0000314"/>
    <property type="project" value="RGD"/>
</dbReference>
<dbReference type="GO" id="GO:0005324">
    <property type="term" value="F:long-chain fatty acid transmembrane transporter activity"/>
    <property type="evidence" value="ECO:0000250"/>
    <property type="project" value="UniProtKB"/>
</dbReference>
<dbReference type="GO" id="GO:0042803">
    <property type="term" value="F:protein homodimerization activity"/>
    <property type="evidence" value="ECO:0000266"/>
    <property type="project" value="RGD"/>
</dbReference>
<dbReference type="GO" id="GO:0015721">
    <property type="term" value="P:bile acid and bile salt transport"/>
    <property type="evidence" value="ECO:0000250"/>
    <property type="project" value="UniProtKB"/>
</dbReference>
<dbReference type="GO" id="GO:0006699">
    <property type="term" value="P:bile acid biosynthetic process"/>
    <property type="evidence" value="ECO:0000250"/>
    <property type="project" value="UniProtKB"/>
</dbReference>
<dbReference type="GO" id="GO:0006635">
    <property type="term" value="P:fatty acid beta-oxidation"/>
    <property type="evidence" value="ECO:0000266"/>
    <property type="project" value="RGD"/>
</dbReference>
<dbReference type="GO" id="GO:0006633">
    <property type="term" value="P:fatty acid biosynthetic process"/>
    <property type="evidence" value="ECO:0000250"/>
    <property type="project" value="UniProtKB"/>
</dbReference>
<dbReference type="GO" id="GO:0006869">
    <property type="term" value="P:lipid transport"/>
    <property type="evidence" value="ECO:0000266"/>
    <property type="project" value="RGD"/>
</dbReference>
<dbReference type="GO" id="GO:0015910">
    <property type="term" value="P:long-chain fatty acid import into peroxisome"/>
    <property type="evidence" value="ECO:0000250"/>
    <property type="project" value="UniProtKB"/>
</dbReference>
<dbReference type="GO" id="GO:0007031">
    <property type="term" value="P:peroxisome organization"/>
    <property type="evidence" value="ECO:0000266"/>
    <property type="project" value="RGD"/>
</dbReference>
<dbReference type="GO" id="GO:1903512">
    <property type="term" value="P:phytanic acid metabolic process"/>
    <property type="evidence" value="ECO:0000250"/>
    <property type="project" value="UniProtKB"/>
</dbReference>
<dbReference type="GO" id="GO:0009410">
    <property type="term" value="P:response to xenobiotic stimulus"/>
    <property type="evidence" value="ECO:0000270"/>
    <property type="project" value="RGD"/>
</dbReference>
<dbReference type="GO" id="GO:0042760">
    <property type="term" value="P:very long-chain fatty acid catabolic process"/>
    <property type="evidence" value="ECO:0000266"/>
    <property type="project" value="RGD"/>
</dbReference>
<dbReference type="GO" id="GO:0000038">
    <property type="term" value="P:very long-chain fatty acid metabolic process"/>
    <property type="evidence" value="ECO:0000266"/>
    <property type="project" value="RGD"/>
</dbReference>
<dbReference type="CDD" id="cd03223">
    <property type="entry name" value="ABCD_peroxisomal_ALDP"/>
    <property type="match status" value="1"/>
</dbReference>
<dbReference type="FunFam" id="1.20.1560.10:FF:000036">
    <property type="entry name" value="ATP-binding cassette sub-family D member 3"/>
    <property type="match status" value="1"/>
</dbReference>
<dbReference type="FunFam" id="3.40.50.300:FF:000636">
    <property type="entry name" value="ATP-binding cassette sub-family D member 3"/>
    <property type="match status" value="1"/>
</dbReference>
<dbReference type="Gene3D" id="1.20.1560.10">
    <property type="entry name" value="ABC transporter type 1, transmembrane domain"/>
    <property type="match status" value="1"/>
</dbReference>
<dbReference type="Gene3D" id="3.40.50.300">
    <property type="entry name" value="P-loop containing nucleotide triphosphate hydrolases"/>
    <property type="match status" value="1"/>
</dbReference>
<dbReference type="InterPro" id="IPR003593">
    <property type="entry name" value="AAA+_ATPase"/>
</dbReference>
<dbReference type="InterPro" id="IPR011527">
    <property type="entry name" value="ABC1_TM_dom"/>
</dbReference>
<dbReference type="InterPro" id="IPR036640">
    <property type="entry name" value="ABC1_TM_sf"/>
</dbReference>
<dbReference type="InterPro" id="IPR003439">
    <property type="entry name" value="ABC_transporter-like_ATP-bd"/>
</dbReference>
<dbReference type="InterPro" id="IPR017871">
    <property type="entry name" value="ABC_transporter-like_CS"/>
</dbReference>
<dbReference type="InterPro" id="IPR050835">
    <property type="entry name" value="ABC_transporter_sub-D"/>
</dbReference>
<dbReference type="InterPro" id="IPR005283">
    <property type="entry name" value="FA_transporter"/>
</dbReference>
<dbReference type="InterPro" id="IPR027417">
    <property type="entry name" value="P-loop_NTPase"/>
</dbReference>
<dbReference type="NCBIfam" id="TIGR00954">
    <property type="entry name" value="3a01203"/>
    <property type="match status" value="1"/>
</dbReference>
<dbReference type="PANTHER" id="PTHR11384:SF62">
    <property type="entry name" value="ATP-BINDING CASSETTE SUB-FAMILY D MEMBER 3"/>
    <property type="match status" value="1"/>
</dbReference>
<dbReference type="PANTHER" id="PTHR11384">
    <property type="entry name" value="ATP-BINDING CASSETTE, SUB-FAMILY D MEMBER"/>
    <property type="match status" value="1"/>
</dbReference>
<dbReference type="Pfam" id="PF06472">
    <property type="entry name" value="ABC_membrane_2"/>
    <property type="match status" value="1"/>
</dbReference>
<dbReference type="Pfam" id="PF00005">
    <property type="entry name" value="ABC_tran"/>
    <property type="match status" value="1"/>
</dbReference>
<dbReference type="SMART" id="SM00382">
    <property type="entry name" value="AAA"/>
    <property type="match status" value="1"/>
</dbReference>
<dbReference type="SUPFAM" id="SSF90123">
    <property type="entry name" value="ABC transporter transmembrane region"/>
    <property type="match status" value="1"/>
</dbReference>
<dbReference type="SUPFAM" id="SSF52540">
    <property type="entry name" value="P-loop containing nucleoside triphosphate hydrolases"/>
    <property type="match status" value="1"/>
</dbReference>
<dbReference type="PROSITE" id="PS50929">
    <property type="entry name" value="ABC_TM1F"/>
    <property type="match status" value="1"/>
</dbReference>
<dbReference type="PROSITE" id="PS00211">
    <property type="entry name" value="ABC_TRANSPORTER_1"/>
    <property type="match status" value="1"/>
</dbReference>
<dbReference type="PROSITE" id="PS50893">
    <property type="entry name" value="ABC_TRANSPORTER_2"/>
    <property type="match status" value="1"/>
</dbReference>
<proteinExistence type="evidence at protein level"/>
<accession>P16970</accession>
<comment type="function">
    <text evidence="1 2 7">Broad substrate specificity ATP-dependent transporter of the ATP-binding cassette (ABC) family that catalyzes the transport of long-chain fatty acids (LCFA)-CoA, dicarboxylic acids-CoA, long-branched-chain fatty acids-CoA and bile acids from the cytosol to the peroxisome lumen for beta-oxydation. Has fatty acyl-CoA thioesterase and ATPase activities (By similarity). Probably hydrolyzes fatty acyl-CoAs into free fatty acids prior to their ATP-dependent transport into peroxisomes (By similarity). Thus, play a role in regulation of LCFAs and energy metabolism namely, in the degradation and biosynthesis of fatty acids by beta-oxidation (PubMed:10207018).</text>
</comment>
<comment type="catalytic activity">
    <reaction evidence="1">
        <text>a very long-chain fatty acyl-CoA + H2O = a very long-chain fatty acid + CoA + H(+)</text>
        <dbReference type="Rhea" id="RHEA:67072"/>
        <dbReference type="ChEBI" id="CHEBI:15377"/>
        <dbReference type="ChEBI" id="CHEBI:15378"/>
        <dbReference type="ChEBI" id="CHEBI:57287"/>
        <dbReference type="ChEBI" id="CHEBI:58950"/>
        <dbReference type="ChEBI" id="CHEBI:138261"/>
    </reaction>
    <physiologicalReaction direction="left-to-right" evidence="1">
        <dbReference type="Rhea" id="RHEA:67073"/>
    </physiologicalReaction>
</comment>
<comment type="catalytic activity">
    <reaction evidence="1">
        <text>a very long-chain fatty acid(in) + ATP + H2O = a very long-chain fatty acid(out) + ADP + phosphate + H(+)</text>
        <dbReference type="Rhea" id="RHEA:67080"/>
        <dbReference type="ChEBI" id="CHEBI:15377"/>
        <dbReference type="ChEBI" id="CHEBI:15378"/>
        <dbReference type="ChEBI" id="CHEBI:30616"/>
        <dbReference type="ChEBI" id="CHEBI:43474"/>
        <dbReference type="ChEBI" id="CHEBI:58950"/>
        <dbReference type="ChEBI" id="CHEBI:456216"/>
    </reaction>
    <physiologicalReaction direction="left-to-right" evidence="1">
        <dbReference type="Rhea" id="RHEA:67081"/>
    </physiologicalReaction>
</comment>
<comment type="catalytic activity">
    <reaction evidence="1">
        <text>a long-chain fatty acyl-CoA + H2O = a long-chain fatty acid + CoA + H(+)</text>
        <dbReference type="Rhea" id="RHEA:67680"/>
        <dbReference type="ChEBI" id="CHEBI:15377"/>
        <dbReference type="ChEBI" id="CHEBI:15378"/>
        <dbReference type="ChEBI" id="CHEBI:57287"/>
        <dbReference type="ChEBI" id="CHEBI:57560"/>
        <dbReference type="ChEBI" id="CHEBI:83139"/>
    </reaction>
    <physiologicalReaction direction="left-to-right" evidence="1">
        <dbReference type="Rhea" id="RHEA:67681"/>
    </physiologicalReaction>
</comment>
<comment type="catalytic activity">
    <reaction evidence="1">
        <text>a long-chain fatty acid(in) + ATP + H2O = a long-chain fatty acid(out) + ADP + phosphate + H(+)</text>
        <dbReference type="Rhea" id="RHEA:67684"/>
        <dbReference type="ChEBI" id="CHEBI:15377"/>
        <dbReference type="ChEBI" id="CHEBI:15378"/>
        <dbReference type="ChEBI" id="CHEBI:30616"/>
        <dbReference type="ChEBI" id="CHEBI:43474"/>
        <dbReference type="ChEBI" id="CHEBI:57560"/>
        <dbReference type="ChEBI" id="CHEBI:456216"/>
    </reaction>
    <physiologicalReaction direction="left-to-right" evidence="1">
        <dbReference type="Rhea" id="RHEA:67685"/>
    </physiologicalReaction>
</comment>
<comment type="catalytic activity">
    <reaction evidence="1">
        <text>pristanoyl-CoA + H2O = 2,6,10,14-tetramethylpentadecanoate + CoA + H(+)</text>
        <dbReference type="Rhea" id="RHEA:40415"/>
        <dbReference type="ChEBI" id="CHEBI:15377"/>
        <dbReference type="ChEBI" id="CHEBI:15378"/>
        <dbReference type="ChEBI" id="CHEBI:57287"/>
        <dbReference type="ChEBI" id="CHEBI:77250"/>
        <dbReference type="ChEBI" id="CHEBI:77268"/>
    </reaction>
    <physiologicalReaction direction="left-to-right" evidence="1">
        <dbReference type="Rhea" id="RHEA:40416"/>
    </physiologicalReaction>
</comment>
<comment type="catalytic activity">
    <reaction evidence="1">
        <text>2,6,10,14-tetramethylpentadecanoate(in) + ATP + H2O = 2,6,10,14-tetramethylpentadecanoate(out) + ADP + phosphate + H(+)</text>
        <dbReference type="Rhea" id="RHEA:67688"/>
        <dbReference type="ChEBI" id="CHEBI:15377"/>
        <dbReference type="ChEBI" id="CHEBI:15378"/>
        <dbReference type="ChEBI" id="CHEBI:30616"/>
        <dbReference type="ChEBI" id="CHEBI:43474"/>
        <dbReference type="ChEBI" id="CHEBI:77268"/>
        <dbReference type="ChEBI" id="CHEBI:456216"/>
    </reaction>
    <physiologicalReaction direction="left-to-right" evidence="1">
        <dbReference type="Rhea" id="RHEA:67689"/>
    </physiologicalReaction>
</comment>
<comment type="catalytic activity">
    <reaction evidence="1">
        <text>hexadecanedioyl-CoA + H2O = hexadecanedioate + CoA + H(+)</text>
        <dbReference type="Rhea" id="RHEA:67696"/>
        <dbReference type="ChEBI" id="CHEBI:15377"/>
        <dbReference type="ChEBI" id="CHEBI:15378"/>
        <dbReference type="ChEBI" id="CHEBI:57287"/>
        <dbReference type="ChEBI" id="CHEBI:76276"/>
        <dbReference type="ChEBI" id="CHEBI:77085"/>
    </reaction>
    <physiologicalReaction direction="left-to-right" evidence="1">
        <dbReference type="Rhea" id="RHEA:67697"/>
    </physiologicalReaction>
</comment>
<comment type="catalytic activity">
    <reaction evidence="1">
        <text>hexadecanedioate(in) + ATP + H2O = hexadecanedioate(out) + ADP + phosphate + H(+)</text>
        <dbReference type="Rhea" id="RHEA:67692"/>
        <dbReference type="ChEBI" id="CHEBI:15377"/>
        <dbReference type="ChEBI" id="CHEBI:15378"/>
        <dbReference type="ChEBI" id="CHEBI:30616"/>
        <dbReference type="ChEBI" id="CHEBI:43474"/>
        <dbReference type="ChEBI" id="CHEBI:76276"/>
        <dbReference type="ChEBI" id="CHEBI:456216"/>
    </reaction>
</comment>
<comment type="catalytic activity">
    <reaction evidence="1">
        <text>(5Z,8Z,11Z,14Z,17Z)-eicosapentaenoyl-CoA + H2O = (5Z,8Z,11Z,14Z,17Z)-eicosapentaenoate + CoA + H(+)</text>
        <dbReference type="Rhea" id="RHEA:67712"/>
        <dbReference type="ChEBI" id="CHEBI:15377"/>
        <dbReference type="ChEBI" id="CHEBI:15378"/>
        <dbReference type="ChEBI" id="CHEBI:57287"/>
        <dbReference type="ChEBI" id="CHEBI:58562"/>
        <dbReference type="ChEBI" id="CHEBI:73862"/>
    </reaction>
    <physiologicalReaction direction="left-to-right" evidence="1">
        <dbReference type="Rhea" id="RHEA:67713"/>
    </physiologicalReaction>
</comment>
<comment type="catalytic activity">
    <reaction evidence="1">
        <text>(5Z,8Z,11Z,14Z,17Z)-eicosapentaenoate(in) + ATP + H2O = (5Z,8Z,11Z,14Z,17Z)-eicosapentaenoate(out) + ADP + phosphate + H(+)</text>
        <dbReference type="Rhea" id="RHEA:67708"/>
        <dbReference type="ChEBI" id="CHEBI:15377"/>
        <dbReference type="ChEBI" id="CHEBI:15378"/>
        <dbReference type="ChEBI" id="CHEBI:30616"/>
        <dbReference type="ChEBI" id="CHEBI:43474"/>
        <dbReference type="ChEBI" id="CHEBI:58562"/>
        <dbReference type="ChEBI" id="CHEBI:456216"/>
    </reaction>
    <physiologicalReaction direction="left-to-right" evidence="1">
        <dbReference type="Rhea" id="RHEA:67709"/>
    </physiologicalReaction>
</comment>
<comment type="catalytic activity">
    <reaction evidence="1">
        <text>(4Z,7Z,10Z,13Z,16Z,19Z)-docosahexaenoyl-CoA + H2O = (4Z,7Z,10Z,13Z,16Z,19Z)-docosahexaenoate + CoA + H(+)</text>
        <dbReference type="Rhea" id="RHEA:67700"/>
        <dbReference type="ChEBI" id="CHEBI:15377"/>
        <dbReference type="ChEBI" id="CHEBI:15378"/>
        <dbReference type="ChEBI" id="CHEBI:57287"/>
        <dbReference type="ChEBI" id="CHEBI:74298"/>
        <dbReference type="ChEBI" id="CHEBI:77016"/>
    </reaction>
    <physiologicalReaction direction="left-to-right" evidence="1">
        <dbReference type="Rhea" id="RHEA:67701"/>
    </physiologicalReaction>
</comment>
<comment type="catalytic activity">
    <reaction evidence="1">
        <text>(4Z,7Z,10Z,13Z,16Z,19Z)-docosahexaenoate(in) + ATP + H2O = (4Z,7Z,10Z,13Z,16Z,19Z)-docosahexaenoate(out) + ADP + phosphate + H(+)</text>
        <dbReference type="Rhea" id="RHEA:67704"/>
        <dbReference type="ChEBI" id="CHEBI:15377"/>
        <dbReference type="ChEBI" id="CHEBI:15378"/>
        <dbReference type="ChEBI" id="CHEBI:30616"/>
        <dbReference type="ChEBI" id="CHEBI:43474"/>
        <dbReference type="ChEBI" id="CHEBI:77016"/>
        <dbReference type="ChEBI" id="CHEBI:456216"/>
    </reaction>
</comment>
<comment type="subunit">
    <text evidence="1 9">Homodimers (PubMed:11883951). Can form heterodimers with ABCD1 and ABCD2. Dimerization is necessary to form an active transporter. Interacts with PEX19; mediates the targeting of ABCD3 to peroxisomes (By similarity).</text>
</comment>
<comment type="subcellular location">
    <subcellularLocation>
        <location evidence="7">Peroxisome membrane</location>
        <topology evidence="4">Multi-pass membrane protein</topology>
    </subcellularLocation>
</comment>
<comment type="PTM">
    <text evidence="1">Ubiquitinated by PEX2 during pexophagy in response to starvation, leading to its degradation.</text>
</comment>
<comment type="similarity">
    <text evidence="12">Belongs to the ABC transporter superfamily. ABCD family. Peroxisomal fatty acyl CoA transporter (TC 3.A.1.203) subfamily.</text>
</comment>
<keyword id="KW-0007">Acetylation</keyword>
<keyword id="KW-0067">ATP-binding</keyword>
<keyword id="KW-0903">Direct protein sequencing</keyword>
<keyword id="KW-0325">Glycoprotein</keyword>
<keyword id="KW-0378">Hydrolase</keyword>
<keyword id="KW-0472">Membrane</keyword>
<keyword id="KW-0547">Nucleotide-binding</keyword>
<keyword id="KW-0576">Peroxisome</keyword>
<keyword id="KW-0597">Phosphoprotein</keyword>
<keyword id="KW-1185">Reference proteome</keyword>
<keyword id="KW-1278">Translocase</keyword>
<keyword id="KW-0812">Transmembrane</keyword>
<keyword id="KW-1133">Transmembrane helix</keyword>
<keyword id="KW-0813">Transport</keyword>
<keyword id="KW-0832">Ubl conjugation</keyword>
<reference key="1">
    <citation type="journal article" date="1990" name="J. Biol. Chem.">
        <title>The 70-kDa peroxisomal membrane protein is a member of the Mdr (P-glycoprotein)-related ATP-binding protein superfamily.</title>
        <authorList>
            <person name="Kamijo K."/>
            <person name="Taketani S."/>
            <person name="Yokota S."/>
            <person name="Osumi T."/>
            <person name="Hashimoto T."/>
        </authorList>
    </citation>
    <scope>NUCLEOTIDE SEQUENCE [MRNA]</scope>
    <scope>PARTIAL PROTEIN SEQUENCE</scope>
    <source>
        <strain>Wistar</strain>
        <tissue>Liver</tissue>
    </source>
</reference>
<reference key="2">
    <citation type="journal article" date="1999" name="Anal. Biochem.">
        <title>Alkaline density gradient floatation of membranes: polypeptide composition of the mammalian peroxisomal membrane.</title>
        <authorList>
            <person name="Gouveia A.M.M."/>
            <person name="Reguenga C."/>
            <person name="Oliveira M.E.M."/>
            <person name="Eckerskorn C."/>
            <person name="Sa-Miranda C."/>
            <person name="Azevedo J.E."/>
        </authorList>
    </citation>
    <scope>PROTEIN SEQUENCE OF 2-15 AND 283-296</scope>
    <source>
        <tissue>Liver</tissue>
    </source>
</reference>
<reference key="3">
    <citation type="journal article" date="1999" name="J. Biol. Chem.">
        <title>Characterization of the 70-kDa peroxisomal membrane protein, an ATP binding cassette transporter.</title>
        <authorList>
            <person name="Imanaka T."/>
            <person name="Aihara K."/>
            <person name="Takano T."/>
            <person name="Yamashita A."/>
            <person name="Sato R."/>
            <person name="Suzuki Y."/>
            <person name="Yokota S."/>
            <person name="Osumi T."/>
        </authorList>
    </citation>
    <scope>SUBCELLULAR LOCATION</scope>
    <scope>FUNCTION</scope>
    <scope>MUTAGENESIS OF 277-GLU-GLU-278 AND LYS-479</scope>
</reference>
<reference key="4">
    <citation type="journal article" date="2002" name="Biochem. Biophys. Res. Commun.">
        <title>Nucleotide-induced conformational changes of PMP70, an ATP binding cassette transporter on rat liver peroxisomal membranes.</title>
        <authorList>
            <person name="Kashiwayama Y."/>
            <person name="Morita M."/>
            <person name="Kamijo K."/>
            <person name="Imanaka T."/>
        </authorList>
    </citation>
    <scope>SUBUNIT</scope>
    <scope>ATP BINDING</scope>
</reference>
<name>ABCD3_RAT</name>
<gene>
    <name type="primary">Abcd3</name>
    <name type="synonym">Pmp70</name>
    <name type="synonym">Pxmp1</name>
</gene>
<evidence type="ECO:0000250" key="1">
    <source>
        <dbReference type="UniProtKB" id="P28288"/>
    </source>
</evidence>
<evidence type="ECO:0000250" key="2">
    <source>
        <dbReference type="UniProtKB" id="P33897"/>
    </source>
</evidence>
<evidence type="ECO:0000250" key="3">
    <source>
        <dbReference type="UniProtKB" id="P55096"/>
    </source>
</evidence>
<evidence type="ECO:0000255" key="4"/>
<evidence type="ECO:0000255" key="5">
    <source>
        <dbReference type="PROSITE-ProRule" id="PRU00434"/>
    </source>
</evidence>
<evidence type="ECO:0000255" key="6">
    <source>
        <dbReference type="PROSITE-ProRule" id="PRU00441"/>
    </source>
</evidence>
<evidence type="ECO:0000269" key="7">
    <source>
    </source>
</evidence>
<evidence type="ECO:0000269" key="8">
    <source>
    </source>
</evidence>
<evidence type="ECO:0000269" key="9">
    <source>
    </source>
</evidence>
<evidence type="ECO:0000303" key="10">
    <source>
    </source>
</evidence>
<evidence type="ECO:0000303" key="11">
    <source>
    </source>
</evidence>
<evidence type="ECO:0000305" key="12"/>